<reference key="1">
    <citation type="journal article" date="1998" name="Science">
        <title>Genome sequence of the nematode C. elegans: a platform for investigating biology.</title>
        <authorList>
            <consortium name="The C. elegans sequencing consortium"/>
        </authorList>
    </citation>
    <scope>NUCLEOTIDE SEQUENCE [LARGE SCALE GENOMIC DNA]</scope>
    <source>
        <strain>Bristol N2</strain>
    </source>
</reference>
<reference key="2">
    <citation type="journal article" date="2006" name="Mol. Biol. Cell">
        <title>ATP-binding cassette transporters are required for efficient RNA interference in Caenorhabditis elegans.</title>
        <authorList>
            <person name="Sundaram P."/>
            <person name="Echalier B."/>
            <person name="Han W."/>
            <person name="Hull D."/>
            <person name="Timmons L."/>
        </authorList>
    </citation>
    <scope>FUNCTION</scope>
</reference>
<reference key="3">
    <citation type="journal article" date="2008" name="Genetics">
        <title>Caenorhabditis elegans ABCRNAi transporters interact genetically with rde-2 and mut-7.</title>
        <authorList>
            <person name="Sundaram P."/>
            <person name="Han W."/>
            <person name="Cohen N."/>
            <person name="Echalier B."/>
            <person name="Albin J."/>
            <person name="Timmons L."/>
        </authorList>
    </citation>
    <scope>FUNCTION</scope>
</reference>
<proteinExistence type="inferred from homology"/>
<name>WHT3_CAEEL</name>
<gene>
    <name type="primary">wht-3</name>
    <name type="ORF">C16C10.12</name>
</gene>
<accession>Q09466</accession>
<feature type="chain" id="PRO_0000093473" description="ABC transporter ATP-binding protein/permease wht-3">
    <location>
        <begin position="1"/>
        <end position="610"/>
    </location>
</feature>
<feature type="transmembrane region" description="Helical" evidence="1">
    <location>
        <begin position="396"/>
        <end position="416"/>
    </location>
</feature>
<feature type="transmembrane region" description="Helical" evidence="1">
    <location>
        <begin position="446"/>
        <end position="466"/>
    </location>
</feature>
<feature type="transmembrane region" description="Helical" evidence="1">
    <location>
        <begin position="477"/>
        <end position="497"/>
    </location>
</feature>
<feature type="transmembrane region" description="Helical" evidence="1">
    <location>
        <begin position="503"/>
        <end position="523"/>
    </location>
</feature>
<feature type="transmembrane region" description="Helical" evidence="1">
    <location>
        <begin position="584"/>
        <end position="604"/>
    </location>
</feature>
<feature type="domain" description="ABC transporter" evidence="2">
    <location>
        <begin position="42"/>
        <end position="277"/>
    </location>
</feature>
<feature type="binding site" evidence="2">
    <location>
        <begin position="74"/>
        <end position="81"/>
    </location>
    <ligand>
        <name>ATP</name>
        <dbReference type="ChEBI" id="CHEBI:30616"/>
    </ligand>
</feature>
<keyword id="KW-0067">ATP-binding</keyword>
<keyword id="KW-0472">Membrane</keyword>
<keyword id="KW-0547">Nucleotide-binding</keyword>
<keyword id="KW-1185">Reference proteome</keyword>
<keyword id="KW-0812">Transmembrane</keyword>
<keyword id="KW-1133">Transmembrane helix</keyword>
<keyword id="KW-0813">Transport</keyword>
<evidence type="ECO:0000255" key="1"/>
<evidence type="ECO:0000255" key="2">
    <source>
        <dbReference type="PROSITE-ProRule" id="PRU00434"/>
    </source>
</evidence>
<evidence type="ECO:0000269" key="3">
    <source>
    </source>
</evidence>
<evidence type="ECO:0000269" key="4">
    <source>
    </source>
</evidence>
<evidence type="ECO:0000305" key="5"/>
<comment type="function">
    <text evidence="3 4">Required for efficient RNA interference (RNAi) of pop-1 indicating a role in the germline development.</text>
</comment>
<comment type="subcellular location">
    <subcellularLocation>
        <location evidence="5">Membrane</location>
        <topology evidence="5">Multi-pass membrane protein</topology>
    </subcellularLocation>
</comment>
<comment type="similarity">
    <text evidence="5">Belongs to the ABC transporter superfamily. ABCG family. Eye pigment precursor importer (TC 3.A.1.204) subfamily.</text>
</comment>
<sequence length="610" mass="69175">MPFDLLAERKRWNAGYESIDTSSQKLTEVVTPITVTWENIEVKTRKKLFSKKQKQLLNRVSGIAKPGEMVALMGASGAGKTTLMNVLMCRNMKGLEKNGTVKVNGTKIGKEISLISGFAQQQEIFIPTLTVDEYLMIQARLRMKANKHTRRERVDEIIEMLRLQNCRDLKIGTPGLVKGISGGEARRLTFACELLSNPSLLFADEPTSGLDSFMAASVVQILKNLANSGRTLIHQPTAELFFQFDKIIFLSMGKTAFMGTPHESVKFFADCGHPIPKLFNPPEWIQSKLSVIPNNETKSRETIGKIIEFYEKSIIHQKSIVEIRVIATTELPPYIENPGFFAETGALLKRACLDVIRSPAQMRMKLIQKVVMGLFIGSLYWQQPLDPRGVRNTNSALYFLIAELTFSTMFGIMTFMEHELPLIAREYHDGLFYVISYYISRFLSYLPLFTIDGALMIVISYWMIGLNSTWQQVAKSILISVLVEQSATSCGLFLACLFETTSLAIAFAVPASGLFALLSGLYGNTNNFPVYIRWMQWTSWCRYGFEGLVVNQWSQVDNPKWDPFYRELILKQFSFNKDNYQLDVIGLCSIVIFFYLAGYIALFIRIRLSR</sequence>
<dbReference type="EMBL" id="Z46787">
    <property type="protein sequence ID" value="CAA86750.1"/>
    <property type="molecule type" value="Genomic_DNA"/>
</dbReference>
<dbReference type="PIR" id="T19333">
    <property type="entry name" value="T19333"/>
</dbReference>
<dbReference type="RefSeq" id="NP_497825.2">
    <property type="nucleotide sequence ID" value="NM_065424.2"/>
</dbReference>
<dbReference type="SMR" id="Q09466"/>
<dbReference type="BioGRID" id="40765">
    <property type="interactions" value="6"/>
</dbReference>
<dbReference type="FunCoup" id="Q09466">
    <property type="interactions" value="95"/>
</dbReference>
<dbReference type="STRING" id="6239.C16C10.12a.1"/>
<dbReference type="PaxDb" id="6239-C16C10.12"/>
<dbReference type="EnsemblMetazoa" id="C16C10.12a.1">
    <property type="protein sequence ID" value="C16C10.12a.1"/>
    <property type="gene ID" value="WBGene00007631"/>
</dbReference>
<dbReference type="GeneID" id="175528"/>
<dbReference type="KEGG" id="cel:CELE_C16C10.12"/>
<dbReference type="AGR" id="WB:WBGene00007631"/>
<dbReference type="CTD" id="175528"/>
<dbReference type="WormBase" id="C16C10.12a">
    <property type="protein sequence ID" value="CE51368"/>
    <property type="gene ID" value="WBGene00007631"/>
    <property type="gene designation" value="wht-3"/>
</dbReference>
<dbReference type="eggNOG" id="KOG0061">
    <property type="taxonomic scope" value="Eukaryota"/>
</dbReference>
<dbReference type="HOGENOM" id="CLU_000604_57_6_1"/>
<dbReference type="InParanoid" id="Q09466"/>
<dbReference type="OMA" id="TWENIEV"/>
<dbReference type="OrthoDB" id="66620at2759"/>
<dbReference type="PhylomeDB" id="Q09466"/>
<dbReference type="PRO" id="PR:Q09466"/>
<dbReference type="Proteomes" id="UP000001940">
    <property type="component" value="Chromosome III"/>
</dbReference>
<dbReference type="Bgee" id="WBGene00007631">
    <property type="expression patterns" value="Expressed in adult organism and 1 other cell type or tissue"/>
</dbReference>
<dbReference type="ExpressionAtlas" id="Q09466">
    <property type="expression patterns" value="baseline"/>
</dbReference>
<dbReference type="GO" id="GO:0005886">
    <property type="term" value="C:plasma membrane"/>
    <property type="evidence" value="ECO:0000318"/>
    <property type="project" value="GO_Central"/>
</dbReference>
<dbReference type="GO" id="GO:0140359">
    <property type="term" value="F:ABC-type transporter activity"/>
    <property type="evidence" value="ECO:0007669"/>
    <property type="project" value="InterPro"/>
</dbReference>
<dbReference type="GO" id="GO:0005524">
    <property type="term" value="F:ATP binding"/>
    <property type="evidence" value="ECO:0007669"/>
    <property type="project" value="UniProtKB-KW"/>
</dbReference>
<dbReference type="GO" id="GO:0016887">
    <property type="term" value="F:ATP hydrolysis activity"/>
    <property type="evidence" value="ECO:0007669"/>
    <property type="project" value="InterPro"/>
</dbReference>
<dbReference type="GO" id="GO:0042626">
    <property type="term" value="F:ATPase-coupled transmembrane transporter activity"/>
    <property type="evidence" value="ECO:0000318"/>
    <property type="project" value="GO_Central"/>
</dbReference>
<dbReference type="GO" id="GO:0055085">
    <property type="term" value="P:transmembrane transport"/>
    <property type="evidence" value="ECO:0000318"/>
    <property type="project" value="GO_Central"/>
</dbReference>
<dbReference type="CDD" id="cd03213">
    <property type="entry name" value="ABCG_EPDR"/>
    <property type="match status" value="1"/>
</dbReference>
<dbReference type="FunFam" id="3.40.50.300:FF:001480">
    <property type="entry name" value="ABC transporter"/>
    <property type="match status" value="1"/>
</dbReference>
<dbReference type="Gene3D" id="3.40.50.300">
    <property type="entry name" value="P-loop containing nucleotide triphosphate hydrolases"/>
    <property type="match status" value="1"/>
</dbReference>
<dbReference type="InterPro" id="IPR003593">
    <property type="entry name" value="AAA+_ATPase"/>
</dbReference>
<dbReference type="InterPro" id="IPR013525">
    <property type="entry name" value="ABC2_TM"/>
</dbReference>
<dbReference type="InterPro" id="IPR003439">
    <property type="entry name" value="ABC_transporter-like_ATP-bd"/>
</dbReference>
<dbReference type="InterPro" id="IPR017871">
    <property type="entry name" value="ABC_transporter-like_CS"/>
</dbReference>
<dbReference type="InterPro" id="IPR050352">
    <property type="entry name" value="ABCG_transporters"/>
</dbReference>
<dbReference type="InterPro" id="IPR027417">
    <property type="entry name" value="P-loop_NTPase"/>
</dbReference>
<dbReference type="PANTHER" id="PTHR48041:SF31">
    <property type="entry name" value="ABC TRANSPORTER ATP-BINDING PROTEIN_PERMEASE WHT-3"/>
    <property type="match status" value="1"/>
</dbReference>
<dbReference type="PANTHER" id="PTHR48041">
    <property type="entry name" value="ABC TRANSPORTER G FAMILY MEMBER 28"/>
    <property type="match status" value="1"/>
</dbReference>
<dbReference type="Pfam" id="PF01061">
    <property type="entry name" value="ABC2_membrane"/>
    <property type="match status" value="1"/>
</dbReference>
<dbReference type="Pfam" id="PF00005">
    <property type="entry name" value="ABC_tran"/>
    <property type="match status" value="1"/>
</dbReference>
<dbReference type="SMART" id="SM00382">
    <property type="entry name" value="AAA"/>
    <property type="match status" value="1"/>
</dbReference>
<dbReference type="SUPFAM" id="SSF52540">
    <property type="entry name" value="P-loop containing nucleoside triphosphate hydrolases"/>
    <property type="match status" value="1"/>
</dbReference>
<dbReference type="PROSITE" id="PS00211">
    <property type="entry name" value="ABC_TRANSPORTER_1"/>
    <property type="match status" value="1"/>
</dbReference>
<dbReference type="PROSITE" id="PS50893">
    <property type="entry name" value="ABC_TRANSPORTER_2"/>
    <property type="match status" value="1"/>
</dbReference>
<organism>
    <name type="scientific">Caenorhabditis elegans</name>
    <dbReference type="NCBI Taxonomy" id="6239"/>
    <lineage>
        <taxon>Eukaryota</taxon>
        <taxon>Metazoa</taxon>
        <taxon>Ecdysozoa</taxon>
        <taxon>Nematoda</taxon>
        <taxon>Chromadorea</taxon>
        <taxon>Rhabditida</taxon>
        <taxon>Rhabditina</taxon>
        <taxon>Rhabditomorpha</taxon>
        <taxon>Rhabditoidea</taxon>
        <taxon>Rhabditidae</taxon>
        <taxon>Peloderinae</taxon>
        <taxon>Caenorhabditis</taxon>
    </lineage>
</organism>
<protein>
    <recommendedName>
        <fullName>ABC transporter ATP-binding protein/permease wht-3</fullName>
    </recommendedName>
    <alternativeName>
        <fullName>White related ABC transporter 3</fullName>
    </alternativeName>
</protein>